<feature type="chain" id="PRO_0000229992" description="Gamma-glutamyl phosphate reductase">
    <location>
        <begin position="1"/>
        <end position="434"/>
    </location>
</feature>
<sequence>MTTLQVASSLNDIAQQTRQAASLLAMLSTEAKNQAIAAVAQALESAKEEILQANIADCEAATAEGIAKPLYKRLQLDEHKLRDAIAGVRDVGKLADPIGQVQIQRELDTGLVLKRITCPLGVLGIIFEARPEAAIQIISLAIKSGNGVILKCGKEAVRSCEAIVKAVKQGLSTTDVNPDVVQLLTTREETLELLRLDKYVDLIIPRGSNSFVRFVQENTRIPVLGHADGICHVYIDKSADIEKAIAVSVDAKVQYPAACNAIETLLVHHSIAAEFLPKVAQALAERQVELKGDERTLQILPEIAAATAIDWETEYSDFILSIKIVDSLTEAIAHINQYGSRHTDAIITEDVAAVETFFGLVNSAGVFHNCSTRFADGFRYGFGAEVGISTQQMPPRGPVGLEGLVTYKYQMTGTGHIVATYTGENAKPFTHQDF</sequence>
<comment type="function">
    <text evidence="1">Catalyzes the NADPH-dependent reduction of L-glutamate 5-phosphate into L-glutamate 5-semialdehyde and phosphate. The product spontaneously undergoes cyclization to form 1-pyrroline-5-carboxylate.</text>
</comment>
<comment type="catalytic activity">
    <reaction evidence="1">
        <text>L-glutamate 5-semialdehyde + phosphate + NADP(+) = L-glutamyl 5-phosphate + NADPH + H(+)</text>
        <dbReference type="Rhea" id="RHEA:19541"/>
        <dbReference type="ChEBI" id="CHEBI:15378"/>
        <dbReference type="ChEBI" id="CHEBI:43474"/>
        <dbReference type="ChEBI" id="CHEBI:57783"/>
        <dbReference type="ChEBI" id="CHEBI:58066"/>
        <dbReference type="ChEBI" id="CHEBI:58274"/>
        <dbReference type="ChEBI" id="CHEBI:58349"/>
        <dbReference type="EC" id="1.2.1.41"/>
    </reaction>
</comment>
<comment type="pathway">
    <text evidence="1">Amino-acid biosynthesis; L-proline biosynthesis; L-glutamate 5-semialdehyde from L-glutamate: step 2/2.</text>
</comment>
<comment type="subcellular location">
    <subcellularLocation>
        <location evidence="1">Cytoplasm</location>
    </subcellularLocation>
</comment>
<comment type="similarity">
    <text evidence="1">Belongs to the gamma-glutamyl phosphate reductase family.</text>
</comment>
<comment type="sequence caution" evidence="2">
    <conflict type="erroneous initiation">
        <sequence resource="EMBL-CDS" id="ABA19683"/>
    </conflict>
</comment>
<evidence type="ECO:0000255" key="1">
    <source>
        <dbReference type="HAMAP-Rule" id="MF_00412"/>
    </source>
</evidence>
<evidence type="ECO:0000305" key="2"/>
<protein>
    <recommendedName>
        <fullName evidence="1">Gamma-glutamyl phosphate reductase</fullName>
        <shortName evidence="1">GPR</shortName>
        <ecNumber evidence="1">1.2.1.41</ecNumber>
    </recommendedName>
    <alternativeName>
        <fullName evidence="1">Glutamate-5-semialdehyde dehydrogenase</fullName>
    </alternativeName>
    <alternativeName>
        <fullName evidence="1">Glutamyl-gamma-semialdehyde dehydrogenase</fullName>
        <shortName evidence="1">GSA dehydrogenase</shortName>
    </alternativeName>
</protein>
<dbReference type="EC" id="1.2.1.41" evidence="1"/>
<dbReference type="EMBL" id="CP000117">
    <property type="protein sequence ID" value="ABA19683.1"/>
    <property type="status" value="ALT_INIT"/>
    <property type="molecule type" value="Genomic_DNA"/>
</dbReference>
<dbReference type="SMR" id="Q3MH53"/>
<dbReference type="STRING" id="240292.Ava_0057"/>
<dbReference type="KEGG" id="ava:Ava_0057"/>
<dbReference type="eggNOG" id="COG0014">
    <property type="taxonomic scope" value="Bacteria"/>
</dbReference>
<dbReference type="HOGENOM" id="CLU_030231_0_1_3"/>
<dbReference type="UniPathway" id="UPA00098">
    <property type="reaction ID" value="UER00360"/>
</dbReference>
<dbReference type="Proteomes" id="UP000002533">
    <property type="component" value="Chromosome"/>
</dbReference>
<dbReference type="GO" id="GO:0005737">
    <property type="term" value="C:cytoplasm"/>
    <property type="evidence" value="ECO:0007669"/>
    <property type="project" value="UniProtKB-SubCell"/>
</dbReference>
<dbReference type="GO" id="GO:0004350">
    <property type="term" value="F:glutamate-5-semialdehyde dehydrogenase activity"/>
    <property type="evidence" value="ECO:0007669"/>
    <property type="project" value="UniProtKB-UniRule"/>
</dbReference>
<dbReference type="GO" id="GO:0050661">
    <property type="term" value="F:NADP binding"/>
    <property type="evidence" value="ECO:0007669"/>
    <property type="project" value="InterPro"/>
</dbReference>
<dbReference type="GO" id="GO:0055129">
    <property type="term" value="P:L-proline biosynthetic process"/>
    <property type="evidence" value="ECO:0007669"/>
    <property type="project" value="UniProtKB-UniRule"/>
</dbReference>
<dbReference type="CDD" id="cd07079">
    <property type="entry name" value="ALDH_F18-19_ProA-GPR"/>
    <property type="match status" value="1"/>
</dbReference>
<dbReference type="FunFam" id="3.40.309.10:FF:000006">
    <property type="entry name" value="Gamma-glutamyl phosphate reductase"/>
    <property type="match status" value="1"/>
</dbReference>
<dbReference type="Gene3D" id="3.40.605.10">
    <property type="entry name" value="Aldehyde Dehydrogenase, Chain A, domain 1"/>
    <property type="match status" value="1"/>
</dbReference>
<dbReference type="Gene3D" id="3.40.309.10">
    <property type="entry name" value="Aldehyde Dehydrogenase, Chain A, domain 2"/>
    <property type="match status" value="1"/>
</dbReference>
<dbReference type="HAMAP" id="MF_00412">
    <property type="entry name" value="ProA"/>
    <property type="match status" value="1"/>
</dbReference>
<dbReference type="InterPro" id="IPR016161">
    <property type="entry name" value="Ald_DH/histidinol_DH"/>
</dbReference>
<dbReference type="InterPro" id="IPR016163">
    <property type="entry name" value="Ald_DH_C"/>
</dbReference>
<dbReference type="InterPro" id="IPR016162">
    <property type="entry name" value="Ald_DH_N"/>
</dbReference>
<dbReference type="InterPro" id="IPR015590">
    <property type="entry name" value="Aldehyde_DH_dom"/>
</dbReference>
<dbReference type="InterPro" id="IPR020593">
    <property type="entry name" value="G-glutamylP_reductase_CS"/>
</dbReference>
<dbReference type="InterPro" id="IPR012134">
    <property type="entry name" value="Glu-5-SA_DH"/>
</dbReference>
<dbReference type="InterPro" id="IPR000965">
    <property type="entry name" value="GPR_dom"/>
</dbReference>
<dbReference type="NCBIfam" id="NF001221">
    <property type="entry name" value="PRK00197.1"/>
    <property type="match status" value="1"/>
</dbReference>
<dbReference type="NCBIfam" id="TIGR00407">
    <property type="entry name" value="proA"/>
    <property type="match status" value="1"/>
</dbReference>
<dbReference type="PANTHER" id="PTHR11063:SF8">
    <property type="entry name" value="DELTA-1-PYRROLINE-5-CARBOXYLATE SYNTHASE"/>
    <property type="match status" value="1"/>
</dbReference>
<dbReference type="PANTHER" id="PTHR11063">
    <property type="entry name" value="GLUTAMATE SEMIALDEHYDE DEHYDROGENASE"/>
    <property type="match status" value="1"/>
</dbReference>
<dbReference type="Pfam" id="PF00171">
    <property type="entry name" value="Aldedh"/>
    <property type="match status" value="1"/>
</dbReference>
<dbReference type="PIRSF" id="PIRSF000151">
    <property type="entry name" value="GPR"/>
    <property type="match status" value="1"/>
</dbReference>
<dbReference type="SUPFAM" id="SSF53720">
    <property type="entry name" value="ALDH-like"/>
    <property type="match status" value="1"/>
</dbReference>
<dbReference type="PROSITE" id="PS01223">
    <property type="entry name" value="PROA"/>
    <property type="match status" value="1"/>
</dbReference>
<accession>Q3MH53</accession>
<reference key="1">
    <citation type="journal article" date="2014" name="Stand. Genomic Sci.">
        <title>Complete genome sequence of Anabaena variabilis ATCC 29413.</title>
        <authorList>
            <person name="Thiel T."/>
            <person name="Pratte B.S."/>
            <person name="Zhong J."/>
            <person name="Goodwin L."/>
            <person name="Copeland A."/>
            <person name="Lucas S."/>
            <person name="Han C."/>
            <person name="Pitluck S."/>
            <person name="Land M.L."/>
            <person name="Kyrpides N.C."/>
            <person name="Woyke T."/>
        </authorList>
    </citation>
    <scope>NUCLEOTIDE SEQUENCE [LARGE SCALE GENOMIC DNA]</scope>
    <source>
        <strain>ATCC 29413 / PCC 7937</strain>
    </source>
</reference>
<keyword id="KW-0028">Amino-acid biosynthesis</keyword>
<keyword id="KW-0963">Cytoplasm</keyword>
<keyword id="KW-0521">NADP</keyword>
<keyword id="KW-0560">Oxidoreductase</keyword>
<keyword id="KW-0641">Proline biosynthesis</keyword>
<organism>
    <name type="scientific">Trichormus variabilis (strain ATCC 29413 / PCC 7937)</name>
    <name type="common">Anabaena variabilis</name>
    <dbReference type="NCBI Taxonomy" id="240292"/>
    <lineage>
        <taxon>Bacteria</taxon>
        <taxon>Bacillati</taxon>
        <taxon>Cyanobacteriota</taxon>
        <taxon>Cyanophyceae</taxon>
        <taxon>Nostocales</taxon>
        <taxon>Nostocaceae</taxon>
        <taxon>Trichormus</taxon>
    </lineage>
</organism>
<gene>
    <name evidence="1" type="primary">proA</name>
    <name type="ordered locus">Ava_0057</name>
</gene>
<name>PROA_TRIV2</name>
<proteinExistence type="inferred from homology"/>